<accession>Q54LU9</accession>
<dbReference type="EMBL" id="AAFI02000085">
    <property type="protein sequence ID" value="EAL64227.1"/>
    <property type="molecule type" value="Genomic_DNA"/>
</dbReference>
<dbReference type="RefSeq" id="XP_637731.1">
    <property type="nucleotide sequence ID" value="XM_632639.1"/>
</dbReference>
<dbReference type="SMR" id="Q54LU9"/>
<dbReference type="FunCoup" id="Q54LU9">
    <property type="interactions" value="693"/>
</dbReference>
<dbReference type="PaxDb" id="44689-DDB0186953"/>
<dbReference type="EnsemblProtists" id="EAL64227">
    <property type="protein sequence ID" value="EAL64227"/>
    <property type="gene ID" value="DDB_G0286405"/>
</dbReference>
<dbReference type="GeneID" id="8625596"/>
<dbReference type="KEGG" id="ddi:DDB_G0286405"/>
<dbReference type="dictyBase" id="DDB_G0286405"/>
<dbReference type="VEuPathDB" id="AmoebaDB:DDB_G0286405"/>
<dbReference type="eggNOG" id="ENOG502RHNR">
    <property type="taxonomic scope" value="Eukaryota"/>
</dbReference>
<dbReference type="HOGENOM" id="CLU_867209_0_0_1"/>
<dbReference type="InParanoid" id="Q54LU9"/>
<dbReference type="OMA" id="CKDENEG"/>
<dbReference type="PRO" id="PR:Q54LU9"/>
<dbReference type="Proteomes" id="UP000002195">
    <property type="component" value="Chromosome 4"/>
</dbReference>
<dbReference type="GO" id="GO:0005634">
    <property type="term" value="C:nucleus"/>
    <property type="evidence" value="ECO:0000318"/>
    <property type="project" value="GO_Central"/>
</dbReference>
<dbReference type="GO" id="GO:0007096">
    <property type="term" value="P:regulation of exit from mitosis"/>
    <property type="evidence" value="ECO:0007669"/>
    <property type="project" value="InterPro"/>
</dbReference>
<dbReference type="Gene3D" id="3.30.900.20">
    <property type="match status" value="1"/>
</dbReference>
<dbReference type="InterPro" id="IPR009511">
    <property type="entry name" value="MAD1/Cdc20-bound-Mad2-bd"/>
</dbReference>
<dbReference type="InterPro" id="IPR053729">
    <property type="entry name" value="MAD2L1BP_domain_sf"/>
</dbReference>
<dbReference type="PANTHER" id="PTHR15681">
    <property type="entry name" value="MAD2L1-BINDING PROTEIN"/>
    <property type="match status" value="1"/>
</dbReference>
<dbReference type="PANTHER" id="PTHR15681:SF1">
    <property type="entry name" value="MAD2L1-BINDING PROTEIN"/>
    <property type="match status" value="1"/>
</dbReference>
<keyword id="KW-1185">Reference proteome</keyword>
<protein>
    <recommendedName>
        <fullName>Putative uncharacterized protein DDB_G0286405</fullName>
    </recommendedName>
</protein>
<reference key="1">
    <citation type="journal article" date="2005" name="Nature">
        <title>The genome of the social amoeba Dictyostelium discoideum.</title>
        <authorList>
            <person name="Eichinger L."/>
            <person name="Pachebat J.A."/>
            <person name="Gloeckner G."/>
            <person name="Rajandream M.A."/>
            <person name="Sucgang R."/>
            <person name="Berriman M."/>
            <person name="Song J."/>
            <person name="Olsen R."/>
            <person name="Szafranski K."/>
            <person name="Xu Q."/>
            <person name="Tunggal B."/>
            <person name="Kummerfeld S."/>
            <person name="Madera M."/>
            <person name="Konfortov B.A."/>
            <person name="Rivero F."/>
            <person name="Bankier A.T."/>
            <person name="Lehmann R."/>
            <person name="Hamlin N."/>
            <person name="Davies R."/>
            <person name="Gaudet P."/>
            <person name="Fey P."/>
            <person name="Pilcher K."/>
            <person name="Chen G."/>
            <person name="Saunders D."/>
            <person name="Sodergren E.J."/>
            <person name="Davis P."/>
            <person name="Kerhornou A."/>
            <person name="Nie X."/>
            <person name="Hall N."/>
            <person name="Anjard C."/>
            <person name="Hemphill L."/>
            <person name="Bason N."/>
            <person name="Farbrother P."/>
            <person name="Desany B."/>
            <person name="Just E."/>
            <person name="Morio T."/>
            <person name="Rost R."/>
            <person name="Churcher C.M."/>
            <person name="Cooper J."/>
            <person name="Haydock S."/>
            <person name="van Driessche N."/>
            <person name="Cronin A."/>
            <person name="Goodhead I."/>
            <person name="Muzny D.M."/>
            <person name="Mourier T."/>
            <person name="Pain A."/>
            <person name="Lu M."/>
            <person name="Harper D."/>
            <person name="Lindsay R."/>
            <person name="Hauser H."/>
            <person name="James K.D."/>
            <person name="Quiles M."/>
            <person name="Madan Babu M."/>
            <person name="Saito T."/>
            <person name="Buchrieser C."/>
            <person name="Wardroper A."/>
            <person name="Felder M."/>
            <person name="Thangavelu M."/>
            <person name="Johnson D."/>
            <person name="Knights A."/>
            <person name="Loulseged H."/>
            <person name="Mungall K.L."/>
            <person name="Oliver K."/>
            <person name="Price C."/>
            <person name="Quail M.A."/>
            <person name="Urushihara H."/>
            <person name="Hernandez J."/>
            <person name="Rabbinowitsch E."/>
            <person name="Steffen D."/>
            <person name="Sanders M."/>
            <person name="Ma J."/>
            <person name="Kohara Y."/>
            <person name="Sharp S."/>
            <person name="Simmonds M.N."/>
            <person name="Spiegler S."/>
            <person name="Tivey A."/>
            <person name="Sugano S."/>
            <person name="White B."/>
            <person name="Walker D."/>
            <person name="Woodward J.R."/>
            <person name="Winckler T."/>
            <person name="Tanaka Y."/>
            <person name="Shaulsky G."/>
            <person name="Schleicher M."/>
            <person name="Weinstock G.M."/>
            <person name="Rosenthal A."/>
            <person name="Cox E.C."/>
            <person name="Chisholm R.L."/>
            <person name="Gibbs R.A."/>
            <person name="Loomis W.F."/>
            <person name="Platzer M."/>
            <person name="Kay R.R."/>
            <person name="Williams J.G."/>
            <person name="Dear P.H."/>
            <person name="Noegel A.A."/>
            <person name="Barrell B.G."/>
            <person name="Kuspa A."/>
        </authorList>
    </citation>
    <scope>NUCLEOTIDE SEQUENCE [LARGE SCALE GENOMIC DNA]</scope>
    <source>
        <strain>AX4</strain>
    </source>
</reference>
<name>Y6953_DICDI</name>
<feature type="chain" id="PRO_0000348508" description="Putative uncharacterized protein DDB_G0286405">
    <location>
        <begin position="1"/>
        <end position="321"/>
    </location>
</feature>
<feature type="region of interest" description="Disordered" evidence="1">
    <location>
        <begin position="280"/>
        <end position="306"/>
    </location>
</feature>
<feature type="compositionally biased region" description="Low complexity" evidence="1">
    <location>
        <begin position="286"/>
        <end position="306"/>
    </location>
</feature>
<gene>
    <name type="ORF">DDB_G0286405</name>
</gene>
<organism>
    <name type="scientific">Dictyostelium discoideum</name>
    <name type="common">Social amoeba</name>
    <dbReference type="NCBI Taxonomy" id="44689"/>
    <lineage>
        <taxon>Eukaryota</taxon>
        <taxon>Amoebozoa</taxon>
        <taxon>Evosea</taxon>
        <taxon>Eumycetozoa</taxon>
        <taxon>Dictyostelia</taxon>
        <taxon>Dictyosteliales</taxon>
        <taxon>Dictyosteliaceae</taxon>
        <taxon>Dictyostelium</taxon>
    </lineage>
</organism>
<evidence type="ECO:0000256" key="1">
    <source>
        <dbReference type="SAM" id="MobiDB-lite"/>
    </source>
</evidence>
<proteinExistence type="predicted"/>
<sequence>MNKKVNEPIIIEFGDILNLEYIELIKNLNIELIKYILYSRNQCSIPVNQLLSEFKNINNNNNNYNNNNYNNNNKIKIPFKKKKFIESLISLFLEIDEIYFNCLDQDEELPIVVSVLLGSSIFNLKEVYIFYFGSYNDYKNGNNNNNNNNNNNKSNNGFQHDENRNKLREIMMKLVIESPDSFSVLQRPLKTNICIYKKINNITDCLNNIYNNNNNNNNNNNNNNNNNNDSRDQLFIPQQDFQLKIKKSTKITVFNFTNSNINDKFDFKITEISLKSISKNSDHINNENNTNSNNDDNSNNSNNNNENYMWYQFHTSINGVN</sequence>